<accession>Q678S1</accession>
<evidence type="ECO:0000250" key="1"/>
<evidence type="ECO:0000250" key="2">
    <source>
        <dbReference type="UniProtKB" id="P00157"/>
    </source>
</evidence>
<evidence type="ECO:0000255" key="3">
    <source>
        <dbReference type="PROSITE-ProRule" id="PRU00967"/>
    </source>
</evidence>
<evidence type="ECO:0000255" key="4">
    <source>
        <dbReference type="PROSITE-ProRule" id="PRU00968"/>
    </source>
</evidence>
<reference key="1">
    <citation type="journal article" date="2004" name="Mol. Phylogenet. Evol.">
        <title>A phylogeny of the extant Phocidae inferred from complete mitochondrial DNA coding regions.</title>
        <authorList>
            <person name="Davis C.S."/>
            <person name="Delisle I."/>
            <person name="Stirling I."/>
            <person name="Siniff D.B."/>
            <person name="Strobeck C."/>
        </authorList>
    </citation>
    <scope>NUCLEOTIDE SEQUENCE [GENOMIC DNA]</scope>
</reference>
<organism>
    <name type="scientific">Arctocephalus australis</name>
    <name type="common">South American fur seal</name>
    <name type="synonym">Phoca australis</name>
    <dbReference type="NCBI Taxonomy" id="161928"/>
    <lineage>
        <taxon>Eukaryota</taxon>
        <taxon>Metazoa</taxon>
        <taxon>Chordata</taxon>
        <taxon>Craniata</taxon>
        <taxon>Vertebrata</taxon>
        <taxon>Euteleostomi</taxon>
        <taxon>Mammalia</taxon>
        <taxon>Eutheria</taxon>
        <taxon>Laurasiatheria</taxon>
        <taxon>Carnivora</taxon>
        <taxon>Caniformia</taxon>
        <taxon>Pinnipedia</taxon>
        <taxon>Otariidae</taxon>
        <taxon>Arctocephalus</taxon>
    </lineage>
</organism>
<sequence>MTNIRKMHPLAKIINNSLIDLPAPSNISAWWNFGSLLAVCLALQILTGLFLAMHYTSDTTTAFSSVTHICRDVNYGWIIRYMHANGASMFFICLYMHVGRGLYYGSYTLMETWNIGIILLFTIMATAFMGYVLPWGQMSFWGATVITNLLSAVPYIGTNLVEWIWGGFSVDKATLTRFFAFHFILPFVASALVMVHLLFLHETGSNNPSGVSSDSDKIPFHPYYTIKDILGALLLILILMLLVMFSPDLLGDPDNYIPANPLSTPPHIKPEWYFLFAYAILRSIPNKLGGVLALLLSILILAIIPLLHTSKQRGMMFRPISQFLFWLLVADLLTLTWIGGQPVEHPFIAIGQLASILYFTILLILMPIAGIIENYILKW</sequence>
<keyword id="KW-0249">Electron transport</keyword>
<keyword id="KW-0349">Heme</keyword>
<keyword id="KW-0408">Iron</keyword>
<keyword id="KW-0472">Membrane</keyword>
<keyword id="KW-0479">Metal-binding</keyword>
<keyword id="KW-0496">Mitochondrion</keyword>
<keyword id="KW-0999">Mitochondrion inner membrane</keyword>
<keyword id="KW-0679">Respiratory chain</keyword>
<keyword id="KW-0812">Transmembrane</keyword>
<keyword id="KW-1133">Transmembrane helix</keyword>
<keyword id="KW-0813">Transport</keyword>
<keyword id="KW-0830">Ubiquinone</keyword>
<geneLocation type="mitochondrion"/>
<dbReference type="EMBL" id="AY377329">
    <property type="protein sequence ID" value="AAQ95108.1"/>
    <property type="molecule type" value="Genomic_DNA"/>
</dbReference>
<dbReference type="SMR" id="Q678S1"/>
<dbReference type="GO" id="GO:0005743">
    <property type="term" value="C:mitochondrial inner membrane"/>
    <property type="evidence" value="ECO:0007669"/>
    <property type="project" value="UniProtKB-SubCell"/>
</dbReference>
<dbReference type="GO" id="GO:0045275">
    <property type="term" value="C:respiratory chain complex III"/>
    <property type="evidence" value="ECO:0007669"/>
    <property type="project" value="InterPro"/>
</dbReference>
<dbReference type="GO" id="GO:0046872">
    <property type="term" value="F:metal ion binding"/>
    <property type="evidence" value="ECO:0007669"/>
    <property type="project" value="UniProtKB-KW"/>
</dbReference>
<dbReference type="GO" id="GO:0008121">
    <property type="term" value="F:ubiquinol-cytochrome-c reductase activity"/>
    <property type="evidence" value="ECO:0007669"/>
    <property type="project" value="InterPro"/>
</dbReference>
<dbReference type="GO" id="GO:0006122">
    <property type="term" value="P:mitochondrial electron transport, ubiquinol to cytochrome c"/>
    <property type="evidence" value="ECO:0007669"/>
    <property type="project" value="TreeGrafter"/>
</dbReference>
<dbReference type="CDD" id="cd00290">
    <property type="entry name" value="cytochrome_b_C"/>
    <property type="match status" value="1"/>
</dbReference>
<dbReference type="CDD" id="cd00284">
    <property type="entry name" value="Cytochrome_b_N"/>
    <property type="match status" value="1"/>
</dbReference>
<dbReference type="FunFam" id="1.20.810.10:FF:000002">
    <property type="entry name" value="Cytochrome b"/>
    <property type="match status" value="1"/>
</dbReference>
<dbReference type="Gene3D" id="1.20.810.10">
    <property type="entry name" value="Cytochrome Bc1 Complex, Chain C"/>
    <property type="match status" value="1"/>
</dbReference>
<dbReference type="InterPro" id="IPR005798">
    <property type="entry name" value="Cyt_b/b6_C"/>
</dbReference>
<dbReference type="InterPro" id="IPR036150">
    <property type="entry name" value="Cyt_b/b6_C_sf"/>
</dbReference>
<dbReference type="InterPro" id="IPR005797">
    <property type="entry name" value="Cyt_b/b6_N"/>
</dbReference>
<dbReference type="InterPro" id="IPR027387">
    <property type="entry name" value="Cytb/b6-like_sf"/>
</dbReference>
<dbReference type="InterPro" id="IPR030689">
    <property type="entry name" value="Cytochrome_b"/>
</dbReference>
<dbReference type="InterPro" id="IPR048260">
    <property type="entry name" value="Cytochrome_b_C_euk/bac"/>
</dbReference>
<dbReference type="InterPro" id="IPR048259">
    <property type="entry name" value="Cytochrome_b_N_euk/bac"/>
</dbReference>
<dbReference type="InterPro" id="IPR016174">
    <property type="entry name" value="Di-haem_cyt_TM"/>
</dbReference>
<dbReference type="PANTHER" id="PTHR19271">
    <property type="entry name" value="CYTOCHROME B"/>
    <property type="match status" value="1"/>
</dbReference>
<dbReference type="PANTHER" id="PTHR19271:SF16">
    <property type="entry name" value="CYTOCHROME B"/>
    <property type="match status" value="1"/>
</dbReference>
<dbReference type="Pfam" id="PF00032">
    <property type="entry name" value="Cytochrom_B_C"/>
    <property type="match status" value="1"/>
</dbReference>
<dbReference type="Pfam" id="PF00033">
    <property type="entry name" value="Cytochrome_B"/>
    <property type="match status" value="1"/>
</dbReference>
<dbReference type="PIRSF" id="PIRSF038885">
    <property type="entry name" value="COB"/>
    <property type="match status" value="1"/>
</dbReference>
<dbReference type="SUPFAM" id="SSF81648">
    <property type="entry name" value="a domain/subunit of cytochrome bc1 complex (Ubiquinol-cytochrome c reductase)"/>
    <property type="match status" value="1"/>
</dbReference>
<dbReference type="SUPFAM" id="SSF81342">
    <property type="entry name" value="Transmembrane di-heme cytochromes"/>
    <property type="match status" value="1"/>
</dbReference>
<dbReference type="PROSITE" id="PS51003">
    <property type="entry name" value="CYTB_CTER"/>
    <property type="match status" value="1"/>
</dbReference>
<dbReference type="PROSITE" id="PS51002">
    <property type="entry name" value="CYTB_NTER"/>
    <property type="match status" value="1"/>
</dbReference>
<comment type="function">
    <text evidence="2">Component of the ubiquinol-cytochrome c reductase complex (complex III or cytochrome b-c1 complex) that is part of the mitochondrial respiratory chain. The b-c1 complex mediates electron transfer from ubiquinol to cytochrome c. Contributes to the generation of a proton gradient across the mitochondrial membrane that is then used for ATP synthesis.</text>
</comment>
<comment type="cofactor">
    <cofactor evidence="2">
        <name>heme b</name>
        <dbReference type="ChEBI" id="CHEBI:60344"/>
    </cofactor>
    <text evidence="2">Binds 2 heme b groups non-covalently.</text>
</comment>
<comment type="subunit">
    <text evidence="2">The cytochrome bc1 complex contains 11 subunits: 3 respiratory subunits (MT-CYB, CYC1 and UQCRFS1), 2 core proteins (UQCRC1 and UQCRC2) and 6 low-molecular weight proteins (UQCRH/QCR6, UQCRB/QCR7, UQCRQ/QCR8, UQCR10/QCR9, UQCR11/QCR10 and a cleavage product of UQCRFS1). This cytochrome bc1 complex then forms a dimer.</text>
</comment>
<comment type="subcellular location">
    <subcellularLocation>
        <location evidence="2">Mitochondrion inner membrane</location>
        <topology evidence="2">Multi-pass membrane protein</topology>
    </subcellularLocation>
</comment>
<comment type="miscellaneous">
    <text evidence="1">Heme 1 (or BL or b562) is low-potential and absorbs at about 562 nm, and heme 2 (or BH or b566) is high-potential and absorbs at about 566 nm.</text>
</comment>
<comment type="similarity">
    <text evidence="3 4">Belongs to the cytochrome b family.</text>
</comment>
<comment type="caution">
    <text evidence="2">The full-length protein contains only eight transmembrane helices, not nine as predicted by bioinformatics tools.</text>
</comment>
<feature type="chain" id="PRO_0000254781" description="Cytochrome b">
    <location>
        <begin position="1"/>
        <end position="379"/>
    </location>
</feature>
<feature type="transmembrane region" description="Helical" evidence="2">
    <location>
        <begin position="33"/>
        <end position="53"/>
    </location>
</feature>
<feature type="transmembrane region" description="Helical" evidence="2">
    <location>
        <begin position="77"/>
        <end position="98"/>
    </location>
</feature>
<feature type="transmembrane region" description="Helical" evidence="2">
    <location>
        <begin position="113"/>
        <end position="133"/>
    </location>
</feature>
<feature type="transmembrane region" description="Helical" evidence="2">
    <location>
        <begin position="178"/>
        <end position="198"/>
    </location>
</feature>
<feature type="transmembrane region" description="Helical" evidence="2">
    <location>
        <begin position="226"/>
        <end position="246"/>
    </location>
</feature>
<feature type="transmembrane region" description="Helical" evidence="2">
    <location>
        <begin position="288"/>
        <end position="308"/>
    </location>
</feature>
<feature type="transmembrane region" description="Helical" evidence="2">
    <location>
        <begin position="320"/>
        <end position="340"/>
    </location>
</feature>
<feature type="transmembrane region" description="Helical" evidence="2">
    <location>
        <begin position="347"/>
        <end position="367"/>
    </location>
</feature>
<feature type="binding site" description="axial binding residue" evidence="2">
    <location>
        <position position="83"/>
    </location>
    <ligand>
        <name>heme b</name>
        <dbReference type="ChEBI" id="CHEBI:60344"/>
        <label>b562</label>
    </ligand>
    <ligandPart>
        <name>Fe</name>
        <dbReference type="ChEBI" id="CHEBI:18248"/>
    </ligandPart>
</feature>
<feature type="binding site" description="axial binding residue" evidence="2">
    <location>
        <position position="97"/>
    </location>
    <ligand>
        <name>heme b</name>
        <dbReference type="ChEBI" id="CHEBI:60344"/>
        <label>b566</label>
    </ligand>
    <ligandPart>
        <name>Fe</name>
        <dbReference type="ChEBI" id="CHEBI:18248"/>
    </ligandPart>
</feature>
<feature type="binding site" description="axial binding residue" evidence="2">
    <location>
        <position position="182"/>
    </location>
    <ligand>
        <name>heme b</name>
        <dbReference type="ChEBI" id="CHEBI:60344"/>
        <label>b562</label>
    </ligand>
    <ligandPart>
        <name>Fe</name>
        <dbReference type="ChEBI" id="CHEBI:18248"/>
    </ligandPart>
</feature>
<feature type="binding site" description="axial binding residue" evidence="2">
    <location>
        <position position="196"/>
    </location>
    <ligand>
        <name>heme b</name>
        <dbReference type="ChEBI" id="CHEBI:60344"/>
        <label>b566</label>
    </ligand>
    <ligandPart>
        <name>Fe</name>
        <dbReference type="ChEBI" id="CHEBI:18248"/>
    </ligandPart>
</feature>
<feature type="binding site" evidence="2">
    <location>
        <position position="201"/>
    </location>
    <ligand>
        <name>a ubiquinone</name>
        <dbReference type="ChEBI" id="CHEBI:16389"/>
    </ligand>
</feature>
<gene>
    <name type="primary">MT-CYB</name>
    <name type="synonym">COB</name>
    <name type="synonym">CYTB</name>
    <name type="synonym">MTCYB</name>
</gene>
<protein>
    <recommendedName>
        <fullName>Cytochrome b</fullName>
    </recommendedName>
    <alternativeName>
        <fullName>Complex III subunit 3</fullName>
    </alternativeName>
    <alternativeName>
        <fullName>Complex III subunit III</fullName>
    </alternativeName>
    <alternativeName>
        <fullName>Cytochrome b-c1 complex subunit 3</fullName>
    </alternativeName>
    <alternativeName>
        <fullName>Ubiquinol-cytochrome-c reductase complex cytochrome b subunit</fullName>
    </alternativeName>
</protein>
<name>CYB_ARCAU</name>
<proteinExistence type="inferred from homology"/>